<proteinExistence type="evidence at transcript level"/>
<comment type="function">
    <text evidence="1">Beta-glucosidases are one of a number of cellulolytic enzymes involved in the degradation of cellulosic biomass. Catalyzes the last step releasing glucose from the inhibitory cellobiose (By similarity).</text>
</comment>
<comment type="catalytic activity">
    <reaction>
        <text>Hydrolysis of terminal, non-reducing beta-D-glucosyl residues with release of beta-D-glucose.</text>
        <dbReference type="EC" id="3.2.1.21"/>
    </reaction>
</comment>
<comment type="pathway">
    <text>Glycan metabolism; cellulose degradation.</text>
</comment>
<comment type="subcellular location">
    <subcellularLocation>
        <location evidence="1">Secreted</location>
    </subcellularLocation>
</comment>
<comment type="similarity">
    <text evidence="4">Belongs to the glycosyl hydrolase 3 family.</text>
</comment>
<sequence length="838" mass="91126">MGEISPRGGDFDIDYILENASSLEKISLLAGHDFWHTAPLPRFNVPSVRVSDGPNGVRGTKFFDGVRAACLPCGTGLAATWDQSLLFDAGVLIGQECLAKGAHCWLGPTVCIQRSPLGGRGFESFAEDPYATGKLAAAYIRGAQSTGVISTIKHFAANDQEHERISVNAVMSERALREVHLLPFQIAIADAAPGAVMTCYNKINGQHVSESKEMLDGLLRKEWGWKGLIMSDWFGTYSTAEALNAGLDLEMPGPTRLRGPLLELAISSRKVSRSTLDERARTVLEFVKRANKAEVSTVESTRDFPEDRRLNRKLAADSIVLLKNESGLLPLNLKALKSAALIGPNMKTAAFCGGGSASLQPYYSISPYQGIMNQLPPGVEIIYETGASSYVFIPELEASEVRTPEGQPGLRMRFYREPPSVKERRVVEETILQESSWQLMGFSNPQLDRLFYADIEAELIAPATGPFEFGLAVYGSGSLFIDDQLIIDNTTVQRGGNFFFGKGTREEKATVDLVKGQLYKIRVEFASGPSSKLMKPGVVNFGGGAGRLGMVQAIDPELAIARAVEAAKRADVTILGVGLTRDHESEGFDRSHMDLPPAVASLVTAVLDVAPDAILMTQSGTPFNMLPWADNVKTHLHAWFGGNELGNGIADVLFGVVNPSGKLPLSFPRRIEDTPTYLNFGSERGQVTYGEGIYVGYRYYEKVLRDVLYPFGHGLSYTSFAYSDFAVDTASATLNVRNSGDVAGAEVVQLYIAADATTSSIARPVKELKGFAKVTLQPGETCSVSIPFDRFTTAFWDQEAHVWTCEKGQYRVMVGSSSQNILLEGVLEIKETTTWSGL</sequence>
<dbReference type="EC" id="3.2.1.21"/>
<dbReference type="EMBL" id="DQ490481">
    <property type="protein sequence ID" value="ABF50857.1"/>
    <property type="molecule type" value="mRNA"/>
</dbReference>
<dbReference type="EMBL" id="AACD01000043">
    <property type="protein sequence ID" value="EAA64717.1"/>
    <property type="molecule type" value="Genomic_DNA"/>
</dbReference>
<dbReference type="EMBL" id="BN001307">
    <property type="protein sequence ID" value="CBF87201.1"/>
    <property type="molecule type" value="Genomic_DNA"/>
</dbReference>
<dbReference type="RefSeq" id="XP_660216.1">
    <property type="nucleotide sequence ID" value="XM_655124.1"/>
</dbReference>
<dbReference type="SMR" id="Q5BA18"/>
<dbReference type="STRING" id="227321.Q5BA18"/>
<dbReference type="CAZy" id="GH3">
    <property type="family name" value="Glycoside Hydrolase Family 3"/>
</dbReference>
<dbReference type="GlyCosmos" id="Q5BA18">
    <property type="glycosylation" value="3 sites, No reported glycans"/>
</dbReference>
<dbReference type="EnsemblFungi" id="CBF87201">
    <property type="protein sequence ID" value="CBF87201"/>
    <property type="gene ID" value="ANIA_02612"/>
</dbReference>
<dbReference type="KEGG" id="ani:ANIA_02612"/>
<dbReference type="VEuPathDB" id="FungiDB:AN2612"/>
<dbReference type="eggNOG" id="ENOG502SMPY">
    <property type="taxonomic scope" value="Eukaryota"/>
</dbReference>
<dbReference type="HOGENOM" id="CLU_004542_4_0_1"/>
<dbReference type="InParanoid" id="Q5BA18"/>
<dbReference type="OMA" id="CWSSERG"/>
<dbReference type="OrthoDB" id="47059at2759"/>
<dbReference type="UniPathway" id="UPA00696"/>
<dbReference type="Proteomes" id="UP000000560">
    <property type="component" value="Chromosome VII"/>
</dbReference>
<dbReference type="GO" id="GO:0005576">
    <property type="term" value="C:extracellular region"/>
    <property type="evidence" value="ECO:0007669"/>
    <property type="project" value="UniProtKB-SubCell"/>
</dbReference>
<dbReference type="GO" id="GO:0008422">
    <property type="term" value="F:beta-glucosidase activity"/>
    <property type="evidence" value="ECO:0000318"/>
    <property type="project" value="GO_Central"/>
</dbReference>
<dbReference type="GO" id="GO:0030245">
    <property type="term" value="P:cellulose catabolic process"/>
    <property type="evidence" value="ECO:0007669"/>
    <property type="project" value="UniProtKB-UniPathway"/>
</dbReference>
<dbReference type="GO" id="GO:0009251">
    <property type="term" value="P:glucan catabolic process"/>
    <property type="evidence" value="ECO:0000318"/>
    <property type="project" value="GO_Central"/>
</dbReference>
<dbReference type="FunFam" id="3.20.20.300:FF:000006">
    <property type="entry name" value="Beta-glucosidase H"/>
    <property type="match status" value="1"/>
</dbReference>
<dbReference type="FunFam" id="2.60.40.10:FF:000495">
    <property type="entry name" value="Periplasmic beta-glucosidase"/>
    <property type="match status" value="1"/>
</dbReference>
<dbReference type="FunFam" id="2.60.120.260:FF:000249">
    <property type="entry name" value="Probable beta-glucosidase K"/>
    <property type="match status" value="1"/>
</dbReference>
<dbReference type="Gene3D" id="2.60.120.260">
    <property type="entry name" value="Galactose-binding domain-like"/>
    <property type="match status" value="1"/>
</dbReference>
<dbReference type="Gene3D" id="3.40.50.1700">
    <property type="entry name" value="Glycoside hydrolase family 3 C-terminal domain"/>
    <property type="match status" value="1"/>
</dbReference>
<dbReference type="Gene3D" id="3.20.20.300">
    <property type="entry name" value="Glycoside hydrolase, family 3, N-terminal domain"/>
    <property type="match status" value="1"/>
</dbReference>
<dbReference type="Gene3D" id="2.60.40.10">
    <property type="entry name" value="Immunoglobulins"/>
    <property type="match status" value="1"/>
</dbReference>
<dbReference type="InterPro" id="IPR050288">
    <property type="entry name" value="Cellulose_deg_GH3"/>
</dbReference>
<dbReference type="InterPro" id="IPR026891">
    <property type="entry name" value="Fn3-like"/>
</dbReference>
<dbReference type="InterPro" id="IPR019800">
    <property type="entry name" value="Glyco_hydro_3_AS"/>
</dbReference>
<dbReference type="InterPro" id="IPR002772">
    <property type="entry name" value="Glyco_hydro_3_C"/>
</dbReference>
<dbReference type="InterPro" id="IPR036881">
    <property type="entry name" value="Glyco_hydro_3_C_sf"/>
</dbReference>
<dbReference type="InterPro" id="IPR001764">
    <property type="entry name" value="Glyco_hydro_3_N"/>
</dbReference>
<dbReference type="InterPro" id="IPR036962">
    <property type="entry name" value="Glyco_hydro_3_N_sf"/>
</dbReference>
<dbReference type="InterPro" id="IPR017853">
    <property type="entry name" value="Glycoside_hydrolase_SF"/>
</dbReference>
<dbReference type="InterPro" id="IPR013783">
    <property type="entry name" value="Ig-like_fold"/>
</dbReference>
<dbReference type="InterPro" id="IPR037524">
    <property type="entry name" value="PA14/GLEYA"/>
</dbReference>
<dbReference type="InterPro" id="IPR011658">
    <property type="entry name" value="PA14_dom"/>
</dbReference>
<dbReference type="PANTHER" id="PTHR42715">
    <property type="entry name" value="BETA-GLUCOSIDASE"/>
    <property type="match status" value="1"/>
</dbReference>
<dbReference type="PANTHER" id="PTHR42715:SF13">
    <property type="entry name" value="BETA-GLUCOSIDASE K-RELATED"/>
    <property type="match status" value="1"/>
</dbReference>
<dbReference type="Pfam" id="PF14310">
    <property type="entry name" value="Fn3-like"/>
    <property type="match status" value="1"/>
</dbReference>
<dbReference type="Pfam" id="PF00933">
    <property type="entry name" value="Glyco_hydro_3"/>
    <property type="match status" value="1"/>
</dbReference>
<dbReference type="Pfam" id="PF01915">
    <property type="entry name" value="Glyco_hydro_3_C"/>
    <property type="match status" value="1"/>
</dbReference>
<dbReference type="Pfam" id="PF07691">
    <property type="entry name" value="PA14"/>
    <property type="match status" value="1"/>
</dbReference>
<dbReference type="PRINTS" id="PR00133">
    <property type="entry name" value="GLHYDRLASE3"/>
</dbReference>
<dbReference type="SMART" id="SM01217">
    <property type="entry name" value="Fn3_like"/>
    <property type="match status" value="1"/>
</dbReference>
<dbReference type="SMART" id="SM00758">
    <property type="entry name" value="PA14"/>
    <property type="match status" value="1"/>
</dbReference>
<dbReference type="SUPFAM" id="SSF51445">
    <property type="entry name" value="(Trans)glycosidases"/>
    <property type="match status" value="1"/>
</dbReference>
<dbReference type="SUPFAM" id="SSF52279">
    <property type="entry name" value="Beta-D-glucan exohydrolase, C-terminal domain"/>
    <property type="match status" value="1"/>
</dbReference>
<dbReference type="PROSITE" id="PS00775">
    <property type="entry name" value="GLYCOSYL_HYDROL_F3"/>
    <property type="match status" value="1"/>
</dbReference>
<dbReference type="PROSITE" id="PS51820">
    <property type="entry name" value="PA14"/>
    <property type="match status" value="1"/>
</dbReference>
<protein>
    <recommendedName>
        <fullName>Probable beta-glucosidase K</fullName>
        <ecNumber>3.2.1.21</ecNumber>
    </recommendedName>
    <alternativeName>
        <fullName>Beta-D-glucoside glucohydrolase K</fullName>
    </alternativeName>
    <alternativeName>
        <fullName>Cellobiase K</fullName>
    </alternativeName>
    <alternativeName>
        <fullName>Gentiobiase K</fullName>
    </alternativeName>
</protein>
<keyword id="KW-0119">Carbohydrate metabolism</keyword>
<keyword id="KW-0136">Cellulose degradation</keyword>
<keyword id="KW-0325">Glycoprotein</keyword>
<keyword id="KW-0326">Glycosidase</keyword>
<keyword id="KW-0378">Hydrolase</keyword>
<keyword id="KW-0624">Polysaccharide degradation</keyword>
<keyword id="KW-1185">Reference proteome</keyword>
<keyword id="KW-0964">Secreted</keyword>
<gene>
    <name type="primary">bglK</name>
    <name type="ORF">AN2612</name>
</gene>
<organism>
    <name type="scientific">Emericella nidulans (strain FGSC A4 / ATCC 38163 / CBS 112.46 / NRRL 194 / M139)</name>
    <name type="common">Aspergillus nidulans</name>
    <dbReference type="NCBI Taxonomy" id="227321"/>
    <lineage>
        <taxon>Eukaryota</taxon>
        <taxon>Fungi</taxon>
        <taxon>Dikarya</taxon>
        <taxon>Ascomycota</taxon>
        <taxon>Pezizomycotina</taxon>
        <taxon>Eurotiomycetes</taxon>
        <taxon>Eurotiomycetidae</taxon>
        <taxon>Eurotiales</taxon>
        <taxon>Aspergillaceae</taxon>
        <taxon>Aspergillus</taxon>
        <taxon>Aspergillus subgen. Nidulantes</taxon>
    </lineage>
</organism>
<reference key="1">
    <citation type="journal article" date="2005" name="Nature">
        <title>Sequencing of Aspergillus nidulans and comparative analysis with A. fumigatus and A. oryzae.</title>
        <authorList>
            <person name="Galagan J.E."/>
            <person name="Calvo S.E."/>
            <person name="Cuomo C."/>
            <person name="Ma L.-J."/>
            <person name="Wortman J.R."/>
            <person name="Batzoglou S."/>
            <person name="Lee S.-I."/>
            <person name="Bastuerkmen M."/>
            <person name="Spevak C.C."/>
            <person name="Clutterbuck J."/>
            <person name="Kapitonov V."/>
            <person name="Jurka J."/>
            <person name="Scazzocchio C."/>
            <person name="Farman M.L."/>
            <person name="Butler J."/>
            <person name="Purcell S."/>
            <person name="Harris S."/>
            <person name="Braus G.H."/>
            <person name="Draht O."/>
            <person name="Busch S."/>
            <person name="D'Enfert C."/>
            <person name="Bouchier C."/>
            <person name="Goldman G.H."/>
            <person name="Bell-Pedersen D."/>
            <person name="Griffiths-Jones S."/>
            <person name="Doonan J.H."/>
            <person name="Yu J."/>
            <person name="Vienken K."/>
            <person name="Pain A."/>
            <person name="Freitag M."/>
            <person name="Selker E.U."/>
            <person name="Archer D.B."/>
            <person name="Penalva M.A."/>
            <person name="Oakley B.R."/>
            <person name="Momany M."/>
            <person name="Tanaka T."/>
            <person name="Kumagai T."/>
            <person name="Asai K."/>
            <person name="Machida M."/>
            <person name="Nierman W.C."/>
            <person name="Denning D.W."/>
            <person name="Caddick M.X."/>
            <person name="Hynes M."/>
            <person name="Paoletti M."/>
            <person name="Fischer R."/>
            <person name="Miller B.L."/>
            <person name="Dyer P.S."/>
            <person name="Sachs M.S."/>
            <person name="Osmani S.A."/>
            <person name="Birren B.W."/>
        </authorList>
    </citation>
    <scope>NUCLEOTIDE SEQUENCE [LARGE SCALE GENOMIC DNA]</scope>
    <source>
        <strain>FGSC A4 / ATCC 38163 / CBS 112.46 / NRRL 194 / M139</strain>
    </source>
</reference>
<reference key="2">
    <citation type="journal article" date="2009" name="Fungal Genet. Biol.">
        <title>The 2008 update of the Aspergillus nidulans genome annotation: a community effort.</title>
        <authorList>
            <person name="Wortman J.R."/>
            <person name="Gilsenan J.M."/>
            <person name="Joardar V."/>
            <person name="Deegan J."/>
            <person name="Clutterbuck J."/>
            <person name="Andersen M.R."/>
            <person name="Archer D."/>
            <person name="Bencina M."/>
            <person name="Braus G."/>
            <person name="Coutinho P."/>
            <person name="von Dohren H."/>
            <person name="Doonan J."/>
            <person name="Driessen A.J."/>
            <person name="Durek P."/>
            <person name="Espeso E."/>
            <person name="Fekete E."/>
            <person name="Flipphi M."/>
            <person name="Estrada C.G."/>
            <person name="Geysens S."/>
            <person name="Goldman G."/>
            <person name="de Groot P.W."/>
            <person name="Hansen K."/>
            <person name="Harris S.D."/>
            <person name="Heinekamp T."/>
            <person name="Helmstaedt K."/>
            <person name="Henrissat B."/>
            <person name="Hofmann G."/>
            <person name="Homan T."/>
            <person name="Horio T."/>
            <person name="Horiuchi H."/>
            <person name="James S."/>
            <person name="Jones M."/>
            <person name="Karaffa L."/>
            <person name="Karanyi Z."/>
            <person name="Kato M."/>
            <person name="Keller N."/>
            <person name="Kelly D.E."/>
            <person name="Kiel J.A."/>
            <person name="Kim J.M."/>
            <person name="van der Klei I.J."/>
            <person name="Klis F.M."/>
            <person name="Kovalchuk A."/>
            <person name="Krasevec N."/>
            <person name="Kubicek C.P."/>
            <person name="Liu B."/>
            <person name="Maccabe A."/>
            <person name="Meyer V."/>
            <person name="Mirabito P."/>
            <person name="Miskei M."/>
            <person name="Mos M."/>
            <person name="Mullins J."/>
            <person name="Nelson D.R."/>
            <person name="Nielsen J."/>
            <person name="Oakley B.R."/>
            <person name="Osmani S.A."/>
            <person name="Pakula T."/>
            <person name="Paszewski A."/>
            <person name="Paulsen I."/>
            <person name="Pilsyk S."/>
            <person name="Pocsi I."/>
            <person name="Punt P.J."/>
            <person name="Ram A.F."/>
            <person name="Ren Q."/>
            <person name="Robellet X."/>
            <person name="Robson G."/>
            <person name="Seiboth B."/>
            <person name="van Solingen P."/>
            <person name="Specht T."/>
            <person name="Sun J."/>
            <person name="Taheri-Talesh N."/>
            <person name="Takeshita N."/>
            <person name="Ussery D."/>
            <person name="vanKuyk P.A."/>
            <person name="Visser H."/>
            <person name="van de Vondervoort P.J."/>
            <person name="de Vries R.P."/>
            <person name="Walton J."/>
            <person name="Xiang X."/>
            <person name="Xiong Y."/>
            <person name="Zeng A.P."/>
            <person name="Brandt B.W."/>
            <person name="Cornell M.J."/>
            <person name="van den Hondel C.A."/>
            <person name="Visser J."/>
            <person name="Oliver S.G."/>
            <person name="Turner G."/>
        </authorList>
    </citation>
    <scope>GENOME REANNOTATION</scope>
    <source>
        <strain>FGSC A4 / ATCC 38163 / CBS 112.46 / NRRL 194 / M139</strain>
    </source>
</reference>
<accession>Q5BA18</accession>
<accession>C8VKN4</accession>
<accession>Q1HFU3</accession>
<name>BGLK_EMENI</name>
<feature type="chain" id="PRO_0000394898" description="Probable beta-glucosidase K">
    <location>
        <begin position="1"/>
        <end position="838"/>
    </location>
</feature>
<feature type="domain" description="PA14" evidence="3">
    <location>
        <begin position="405"/>
        <end position="564"/>
    </location>
</feature>
<feature type="active site" evidence="1">
    <location>
        <position position="232"/>
    </location>
</feature>
<feature type="glycosylation site" description="N-linked (GlcNAc...) asparagine" evidence="2">
    <location>
        <position position="19"/>
    </location>
</feature>
<feature type="glycosylation site" description="N-linked (GlcNAc...) asparagine" evidence="2">
    <location>
        <position position="324"/>
    </location>
</feature>
<feature type="glycosylation site" description="N-linked (GlcNAc...) asparagine" evidence="2">
    <location>
        <position position="489"/>
    </location>
</feature>
<evidence type="ECO:0000250" key="1"/>
<evidence type="ECO:0000255" key="2"/>
<evidence type="ECO:0000255" key="3">
    <source>
        <dbReference type="PROSITE-ProRule" id="PRU01164"/>
    </source>
</evidence>
<evidence type="ECO:0000305" key="4"/>